<protein>
    <recommendedName>
        <fullName evidence="1">Probable transcriptional regulatory protein Npun_R5651</fullName>
    </recommendedName>
</protein>
<sequence>MAGHSKWANIKRQKAVVDAKKGKTFTQLSRAIIVAARSGVPDPALNFQLRTAIDKAKAASIPNDNIERAIAKGAGTFGGDNAIFEAIRYEGYGPGGVAILIEAFTDNRNRTAADLRVAFSKNGGNLGETGCVSWMFDQKGVCVVQGVIDEEQLLEASLEGGAESYEMTEDEMAEVFTDIGNLEALSQTLKNQGFKVTDAEFRWIPSNSVEVTDPDQARSLFKLIDTLEGLDDVQNVTANFDITEELMALSIS</sequence>
<accession>B2J7Y8</accession>
<reference key="1">
    <citation type="journal article" date="2013" name="Plant Physiol.">
        <title>A Nostoc punctiforme Sugar Transporter Necessary to Establish a Cyanobacterium-Plant Symbiosis.</title>
        <authorList>
            <person name="Ekman M."/>
            <person name="Picossi S."/>
            <person name="Campbell E.L."/>
            <person name="Meeks J.C."/>
            <person name="Flores E."/>
        </authorList>
    </citation>
    <scope>NUCLEOTIDE SEQUENCE [LARGE SCALE GENOMIC DNA]</scope>
    <source>
        <strain>ATCC 29133 / PCC 73102</strain>
    </source>
</reference>
<proteinExistence type="inferred from homology"/>
<organism>
    <name type="scientific">Nostoc punctiforme (strain ATCC 29133 / PCC 73102)</name>
    <dbReference type="NCBI Taxonomy" id="63737"/>
    <lineage>
        <taxon>Bacteria</taxon>
        <taxon>Bacillati</taxon>
        <taxon>Cyanobacteriota</taxon>
        <taxon>Cyanophyceae</taxon>
        <taxon>Nostocales</taxon>
        <taxon>Nostocaceae</taxon>
        <taxon>Nostoc</taxon>
    </lineage>
</organism>
<gene>
    <name type="ordered locus">Npun_R5651</name>
</gene>
<dbReference type="EMBL" id="CP001037">
    <property type="protein sequence ID" value="ACC83953.1"/>
    <property type="molecule type" value="Genomic_DNA"/>
</dbReference>
<dbReference type="RefSeq" id="WP_012411896.1">
    <property type="nucleotide sequence ID" value="NC_010628.1"/>
</dbReference>
<dbReference type="SMR" id="B2J7Y8"/>
<dbReference type="STRING" id="63737.Npun_R5651"/>
<dbReference type="EnsemblBacteria" id="ACC83953">
    <property type="protein sequence ID" value="ACC83953"/>
    <property type="gene ID" value="Npun_R5651"/>
</dbReference>
<dbReference type="KEGG" id="npu:Npun_R5651"/>
<dbReference type="eggNOG" id="COG0217">
    <property type="taxonomic scope" value="Bacteria"/>
</dbReference>
<dbReference type="HOGENOM" id="CLU_062974_1_0_3"/>
<dbReference type="OrthoDB" id="9781053at2"/>
<dbReference type="PhylomeDB" id="B2J7Y8"/>
<dbReference type="Proteomes" id="UP000001191">
    <property type="component" value="Chromosome"/>
</dbReference>
<dbReference type="GO" id="GO:0005829">
    <property type="term" value="C:cytosol"/>
    <property type="evidence" value="ECO:0007669"/>
    <property type="project" value="TreeGrafter"/>
</dbReference>
<dbReference type="GO" id="GO:0003677">
    <property type="term" value="F:DNA binding"/>
    <property type="evidence" value="ECO:0007669"/>
    <property type="project" value="UniProtKB-UniRule"/>
</dbReference>
<dbReference type="GO" id="GO:0006355">
    <property type="term" value="P:regulation of DNA-templated transcription"/>
    <property type="evidence" value="ECO:0007669"/>
    <property type="project" value="UniProtKB-UniRule"/>
</dbReference>
<dbReference type="FunFam" id="1.10.10.200:FF:000002">
    <property type="entry name" value="Probable transcriptional regulatory protein CLM62_37755"/>
    <property type="match status" value="1"/>
</dbReference>
<dbReference type="Gene3D" id="1.10.10.200">
    <property type="match status" value="1"/>
</dbReference>
<dbReference type="Gene3D" id="3.30.70.980">
    <property type="match status" value="2"/>
</dbReference>
<dbReference type="HAMAP" id="MF_00693">
    <property type="entry name" value="Transcrip_reg_TACO1"/>
    <property type="match status" value="1"/>
</dbReference>
<dbReference type="InterPro" id="IPR017856">
    <property type="entry name" value="Integrase-like_N"/>
</dbReference>
<dbReference type="InterPro" id="IPR048300">
    <property type="entry name" value="TACO1_YebC-like_2nd/3rd_dom"/>
</dbReference>
<dbReference type="InterPro" id="IPR049083">
    <property type="entry name" value="TACO1_YebC_N"/>
</dbReference>
<dbReference type="InterPro" id="IPR002876">
    <property type="entry name" value="Transcrip_reg_TACO1-like"/>
</dbReference>
<dbReference type="InterPro" id="IPR026564">
    <property type="entry name" value="Transcrip_reg_TACO1-like_dom3"/>
</dbReference>
<dbReference type="InterPro" id="IPR029072">
    <property type="entry name" value="YebC-like"/>
</dbReference>
<dbReference type="NCBIfam" id="NF001030">
    <property type="entry name" value="PRK00110.1"/>
    <property type="match status" value="1"/>
</dbReference>
<dbReference type="NCBIfam" id="NF009044">
    <property type="entry name" value="PRK12378.1"/>
    <property type="match status" value="1"/>
</dbReference>
<dbReference type="NCBIfam" id="TIGR01033">
    <property type="entry name" value="YebC/PmpR family DNA-binding transcriptional regulator"/>
    <property type="match status" value="1"/>
</dbReference>
<dbReference type="PANTHER" id="PTHR12532:SF6">
    <property type="entry name" value="TRANSCRIPTIONAL REGULATORY PROTEIN YEBC-RELATED"/>
    <property type="match status" value="1"/>
</dbReference>
<dbReference type="PANTHER" id="PTHR12532">
    <property type="entry name" value="TRANSLATIONAL ACTIVATOR OF CYTOCHROME C OXIDASE 1"/>
    <property type="match status" value="1"/>
</dbReference>
<dbReference type="Pfam" id="PF20772">
    <property type="entry name" value="TACO1_YebC_N"/>
    <property type="match status" value="1"/>
</dbReference>
<dbReference type="Pfam" id="PF01709">
    <property type="entry name" value="Transcrip_reg"/>
    <property type="match status" value="1"/>
</dbReference>
<dbReference type="SUPFAM" id="SSF75625">
    <property type="entry name" value="YebC-like"/>
    <property type="match status" value="1"/>
</dbReference>
<feature type="chain" id="PRO_1000132222" description="Probable transcriptional regulatory protein Npun_R5651">
    <location>
        <begin position="1"/>
        <end position="252"/>
    </location>
</feature>
<evidence type="ECO:0000255" key="1">
    <source>
        <dbReference type="HAMAP-Rule" id="MF_00693"/>
    </source>
</evidence>
<name>Y5651_NOSP7</name>
<comment type="subcellular location">
    <subcellularLocation>
        <location evidence="1">Cytoplasm</location>
    </subcellularLocation>
</comment>
<comment type="similarity">
    <text evidence="1">Belongs to the TACO1 family.</text>
</comment>
<keyword id="KW-0963">Cytoplasm</keyword>
<keyword id="KW-0238">DNA-binding</keyword>
<keyword id="KW-1185">Reference proteome</keyword>
<keyword id="KW-0804">Transcription</keyword>
<keyword id="KW-0805">Transcription regulation</keyword>